<dbReference type="EC" id="3.6.1.27" evidence="1"/>
<dbReference type="EMBL" id="CP000474">
    <property type="protein sequence ID" value="ABM09871.1"/>
    <property type="molecule type" value="Genomic_DNA"/>
</dbReference>
<dbReference type="RefSeq" id="WP_011774854.1">
    <property type="nucleotide sequence ID" value="NC_008711.1"/>
</dbReference>
<dbReference type="SMR" id="A1R6P8"/>
<dbReference type="STRING" id="290340.AAur_2168"/>
<dbReference type="KEGG" id="aau:AAur_2168"/>
<dbReference type="eggNOG" id="COG1968">
    <property type="taxonomic scope" value="Bacteria"/>
</dbReference>
<dbReference type="HOGENOM" id="CLU_060296_1_0_11"/>
<dbReference type="OrthoDB" id="9808289at2"/>
<dbReference type="Proteomes" id="UP000000637">
    <property type="component" value="Chromosome"/>
</dbReference>
<dbReference type="GO" id="GO:0005886">
    <property type="term" value="C:plasma membrane"/>
    <property type="evidence" value="ECO:0007669"/>
    <property type="project" value="UniProtKB-SubCell"/>
</dbReference>
<dbReference type="GO" id="GO:0050380">
    <property type="term" value="F:undecaprenyl-diphosphatase activity"/>
    <property type="evidence" value="ECO:0007669"/>
    <property type="project" value="UniProtKB-UniRule"/>
</dbReference>
<dbReference type="GO" id="GO:0071555">
    <property type="term" value="P:cell wall organization"/>
    <property type="evidence" value="ECO:0007669"/>
    <property type="project" value="UniProtKB-KW"/>
</dbReference>
<dbReference type="GO" id="GO:0009252">
    <property type="term" value="P:peptidoglycan biosynthetic process"/>
    <property type="evidence" value="ECO:0007669"/>
    <property type="project" value="UniProtKB-KW"/>
</dbReference>
<dbReference type="GO" id="GO:0008360">
    <property type="term" value="P:regulation of cell shape"/>
    <property type="evidence" value="ECO:0007669"/>
    <property type="project" value="UniProtKB-KW"/>
</dbReference>
<dbReference type="GO" id="GO:0046677">
    <property type="term" value="P:response to antibiotic"/>
    <property type="evidence" value="ECO:0007669"/>
    <property type="project" value="UniProtKB-UniRule"/>
</dbReference>
<dbReference type="HAMAP" id="MF_01006">
    <property type="entry name" value="Undec_diphosphatase"/>
    <property type="match status" value="1"/>
</dbReference>
<dbReference type="InterPro" id="IPR003824">
    <property type="entry name" value="UppP"/>
</dbReference>
<dbReference type="NCBIfam" id="NF001392">
    <property type="entry name" value="PRK00281.2-1"/>
    <property type="match status" value="1"/>
</dbReference>
<dbReference type="NCBIfam" id="TIGR00753">
    <property type="entry name" value="undec_PP_bacA"/>
    <property type="match status" value="1"/>
</dbReference>
<dbReference type="PANTHER" id="PTHR30622">
    <property type="entry name" value="UNDECAPRENYL-DIPHOSPHATASE"/>
    <property type="match status" value="1"/>
</dbReference>
<dbReference type="PANTHER" id="PTHR30622:SF4">
    <property type="entry name" value="UNDECAPRENYL-DIPHOSPHATASE"/>
    <property type="match status" value="1"/>
</dbReference>
<dbReference type="Pfam" id="PF02673">
    <property type="entry name" value="BacA"/>
    <property type="match status" value="1"/>
</dbReference>
<reference key="1">
    <citation type="journal article" date="2006" name="PLoS Genet.">
        <title>Secrets of soil survival revealed by the genome sequence of Arthrobacter aurescens TC1.</title>
        <authorList>
            <person name="Mongodin E.F."/>
            <person name="Shapir N."/>
            <person name="Daugherty S.C."/>
            <person name="DeBoy R.T."/>
            <person name="Emerson J.B."/>
            <person name="Shvartzbeyn A."/>
            <person name="Radune D."/>
            <person name="Vamathevan J."/>
            <person name="Riggs F."/>
            <person name="Grinberg V."/>
            <person name="Khouri H.M."/>
            <person name="Wackett L.P."/>
            <person name="Nelson K.E."/>
            <person name="Sadowsky M.J."/>
        </authorList>
    </citation>
    <scope>NUCLEOTIDE SEQUENCE [LARGE SCALE GENOMIC DNA]</scope>
    <source>
        <strain>TC1</strain>
    </source>
</reference>
<protein>
    <recommendedName>
        <fullName evidence="1">Undecaprenyl-diphosphatase</fullName>
        <ecNumber evidence="1">3.6.1.27</ecNumber>
    </recommendedName>
    <alternativeName>
        <fullName evidence="1">Bacitracin resistance protein</fullName>
    </alternativeName>
    <alternativeName>
        <fullName evidence="1">Undecaprenyl pyrophosphate phosphatase</fullName>
    </alternativeName>
</protein>
<accession>A1R6P8</accession>
<evidence type="ECO:0000255" key="1">
    <source>
        <dbReference type="HAMAP-Rule" id="MF_01006"/>
    </source>
</evidence>
<sequence>MNWIEAALLGLVQGLTEFLPISSSAHLRIVGSFLPNAADPGAAFTAITQLGTETAVIVYFWRDIVRIVQAWFGSLTGKVERNNPDARMGWLVILGSLPIIVLGLLFQDQIESVLRSMWIVATMLIVFGMILAVADAVGRQERDLTQLSYKHGILYGFAQAMALIPGVSRSGGTITAGLLMGYTREAAARYSFLLAIPAVFGSGLYQLYKTVSNEGLAGPYGLPETALATVIAFVVGYVIIGWFLKFVSTRSYRLFVWYRILLGLALYVLLGFNVISA</sequence>
<name>UPPP_PAEAT</name>
<proteinExistence type="inferred from homology"/>
<organism>
    <name type="scientific">Paenarthrobacter aurescens (strain TC1)</name>
    <dbReference type="NCBI Taxonomy" id="290340"/>
    <lineage>
        <taxon>Bacteria</taxon>
        <taxon>Bacillati</taxon>
        <taxon>Actinomycetota</taxon>
        <taxon>Actinomycetes</taxon>
        <taxon>Micrococcales</taxon>
        <taxon>Micrococcaceae</taxon>
        <taxon>Paenarthrobacter</taxon>
    </lineage>
</organism>
<gene>
    <name evidence="1" type="primary">uppP</name>
    <name type="ordered locus">AAur_2168</name>
</gene>
<feature type="chain" id="PRO_0000290681" description="Undecaprenyl-diphosphatase">
    <location>
        <begin position="1"/>
        <end position="277"/>
    </location>
</feature>
<feature type="transmembrane region" description="Helical" evidence="1">
    <location>
        <begin position="88"/>
        <end position="108"/>
    </location>
</feature>
<feature type="transmembrane region" description="Helical" evidence="1">
    <location>
        <begin position="117"/>
        <end position="137"/>
    </location>
</feature>
<feature type="transmembrane region" description="Helical" evidence="1">
    <location>
        <begin position="157"/>
        <end position="179"/>
    </location>
</feature>
<feature type="transmembrane region" description="Helical" evidence="1">
    <location>
        <begin position="191"/>
        <end position="211"/>
    </location>
</feature>
<feature type="transmembrane region" description="Helical" evidence="1">
    <location>
        <begin position="227"/>
        <end position="247"/>
    </location>
</feature>
<feature type="transmembrane region" description="Helical" evidence="1">
    <location>
        <begin position="255"/>
        <end position="275"/>
    </location>
</feature>
<keyword id="KW-0046">Antibiotic resistance</keyword>
<keyword id="KW-1003">Cell membrane</keyword>
<keyword id="KW-0133">Cell shape</keyword>
<keyword id="KW-0961">Cell wall biogenesis/degradation</keyword>
<keyword id="KW-0378">Hydrolase</keyword>
<keyword id="KW-0472">Membrane</keyword>
<keyword id="KW-0573">Peptidoglycan synthesis</keyword>
<keyword id="KW-0812">Transmembrane</keyword>
<keyword id="KW-1133">Transmembrane helix</keyword>
<comment type="function">
    <text evidence="1">Catalyzes the dephosphorylation of undecaprenyl diphosphate (UPP). Confers resistance to bacitracin.</text>
</comment>
<comment type="catalytic activity">
    <reaction evidence="1">
        <text>di-trans,octa-cis-undecaprenyl diphosphate + H2O = di-trans,octa-cis-undecaprenyl phosphate + phosphate + H(+)</text>
        <dbReference type="Rhea" id="RHEA:28094"/>
        <dbReference type="ChEBI" id="CHEBI:15377"/>
        <dbReference type="ChEBI" id="CHEBI:15378"/>
        <dbReference type="ChEBI" id="CHEBI:43474"/>
        <dbReference type="ChEBI" id="CHEBI:58405"/>
        <dbReference type="ChEBI" id="CHEBI:60392"/>
        <dbReference type="EC" id="3.6.1.27"/>
    </reaction>
</comment>
<comment type="subcellular location">
    <subcellularLocation>
        <location evidence="1">Cell membrane</location>
        <topology evidence="1">Multi-pass membrane protein</topology>
    </subcellularLocation>
</comment>
<comment type="miscellaneous">
    <text>Bacitracin is thought to be involved in the inhibition of peptidoglycan synthesis by sequestering undecaprenyl diphosphate, thereby reducing the pool of lipid carrier available.</text>
</comment>
<comment type="similarity">
    <text evidence="1">Belongs to the UppP family.</text>
</comment>